<keyword id="KW-0560">Oxidoreductase</keyword>
<keyword id="KW-1185">Reference proteome</keyword>
<evidence type="ECO:0000255" key="1">
    <source>
        <dbReference type="HAMAP-Rule" id="MF_01401"/>
    </source>
</evidence>
<sequence length="215" mass="23778">MSLFYAKPEKAKMPTEKTALKGRNVPIETAAEHFVSGMPLAPPYPSNMQQCVFGLGCFWGAERKFWQLPGVYVTAVGYSAGFTPNPTYEEVCSGSTGHNEVVLVVYNPSQVSFKKLLAVFWESHNPTQGMRQGNDLGTQYRSGVYVYSDEQAEQAEHSKQVVQAMLTEKGYGEITTEIIKAKEFYFAEAYHQQYLAKNPNGYCGLGGTGIVVPCD</sequence>
<protein>
    <recommendedName>
        <fullName evidence="1">Peptide methionine sulfoxide reductase MsrA</fullName>
        <shortName evidence="1">Protein-methionine-S-oxide reductase</shortName>
        <ecNumber evidence="1">1.8.4.11</ecNumber>
    </recommendedName>
    <alternativeName>
        <fullName evidence="1">Peptide-methionine (S)-S-oxide reductase</fullName>
        <shortName evidence="1">Peptide Met(O) reductase</shortName>
    </alternativeName>
</protein>
<proteinExistence type="inferred from homology"/>
<accession>Q21JK7</accession>
<dbReference type="EC" id="1.8.4.11" evidence="1"/>
<dbReference type="EMBL" id="CP000282">
    <property type="protein sequence ID" value="ABD81122.1"/>
    <property type="molecule type" value="Genomic_DNA"/>
</dbReference>
<dbReference type="RefSeq" id="WP_011468340.1">
    <property type="nucleotide sequence ID" value="NC_007912.1"/>
</dbReference>
<dbReference type="SMR" id="Q21JK7"/>
<dbReference type="STRING" id="203122.Sde_1862"/>
<dbReference type="GeneID" id="98613536"/>
<dbReference type="KEGG" id="sde:Sde_1862"/>
<dbReference type="eggNOG" id="COG0225">
    <property type="taxonomic scope" value="Bacteria"/>
</dbReference>
<dbReference type="HOGENOM" id="CLU_031040_10_3_6"/>
<dbReference type="OrthoDB" id="4174719at2"/>
<dbReference type="Proteomes" id="UP000001947">
    <property type="component" value="Chromosome"/>
</dbReference>
<dbReference type="GO" id="GO:0005737">
    <property type="term" value="C:cytoplasm"/>
    <property type="evidence" value="ECO:0007669"/>
    <property type="project" value="TreeGrafter"/>
</dbReference>
<dbReference type="GO" id="GO:0036456">
    <property type="term" value="F:L-methionine-(S)-S-oxide reductase activity"/>
    <property type="evidence" value="ECO:0007669"/>
    <property type="project" value="TreeGrafter"/>
</dbReference>
<dbReference type="GO" id="GO:0008113">
    <property type="term" value="F:peptide-methionine (S)-S-oxide reductase activity"/>
    <property type="evidence" value="ECO:0007669"/>
    <property type="project" value="UniProtKB-UniRule"/>
</dbReference>
<dbReference type="GO" id="GO:0034599">
    <property type="term" value="P:cellular response to oxidative stress"/>
    <property type="evidence" value="ECO:0007669"/>
    <property type="project" value="TreeGrafter"/>
</dbReference>
<dbReference type="GO" id="GO:0036211">
    <property type="term" value="P:protein modification process"/>
    <property type="evidence" value="ECO:0007669"/>
    <property type="project" value="UniProtKB-UniRule"/>
</dbReference>
<dbReference type="FunFam" id="3.30.1060.10:FF:000001">
    <property type="entry name" value="Peptide methionine sulfoxide reductase MsrA"/>
    <property type="match status" value="1"/>
</dbReference>
<dbReference type="Gene3D" id="3.30.1060.10">
    <property type="entry name" value="Peptide methionine sulphoxide reductase MsrA"/>
    <property type="match status" value="1"/>
</dbReference>
<dbReference type="HAMAP" id="MF_01401">
    <property type="entry name" value="MsrA"/>
    <property type="match status" value="1"/>
</dbReference>
<dbReference type="InterPro" id="IPR002569">
    <property type="entry name" value="Met_Sox_Rdtase_MsrA_dom"/>
</dbReference>
<dbReference type="InterPro" id="IPR036509">
    <property type="entry name" value="Met_Sox_Rdtase_MsrA_sf"/>
</dbReference>
<dbReference type="InterPro" id="IPR050162">
    <property type="entry name" value="MsrA_MetSO_reductase"/>
</dbReference>
<dbReference type="NCBIfam" id="TIGR00401">
    <property type="entry name" value="msrA"/>
    <property type="match status" value="1"/>
</dbReference>
<dbReference type="PANTHER" id="PTHR42799">
    <property type="entry name" value="MITOCHONDRIAL PEPTIDE METHIONINE SULFOXIDE REDUCTASE"/>
    <property type="match status" value="1"/>
</dbReference>
<dbReference type="PANTHER" id="PTHR42799:SF2">
    <property type="entry name" value="MITOCHONDRIAL PEPTIDE METHIONINE SULFOXIDE REDUCTASE"/>
    <property type="match status" value="1"/>
</dbReference>
<dbReference type="Pfam" id="PF01625">
    <property type="entry name" value="PMSR"/>
    <property type="match status" value="1"/>
</dbReference>
<dbReference type="SUPFAM" id="SSF55068">
    <property type="entry name" value="Peptide methionine sulfoxide reductase"/>
    <property type="match status" value="1"/>
</dbReference>
<comment type="function">
    <text evidence="1">Has an important function as a repair enzyme for proteins that have been inactivated by oxidation. Catalyzes the reversible oxidation-reduction of methionine sulfoxide in proteins to methionine.</text>
</comment>
<comment type="catalytic activity">
    <reaction evidence="1">
        <text>L-methionyl-[protein] + [thioredoxin]-disulfide + H2O = L-methionyl-(S)-S-oxide-[protein] + [thioredoxin]-dithiol</text>
        <dbReference type="Rhea" id="RHEA:14217"/>
        <dbReference type="Rhea" id="RHEA-COMP:10698"/>
        <dbReference type="Rhea" id="RHEA-COMP:10700"/>
        <dbReference type="Rhea" id="RHEA-COMP:12313"/>
        <dbReference type="Rhea" id="RHEA-COMP:12315"/>
        <dbReference type="ChEBI" id="CHEBI:15377"/>
        <dbReference type="ChEBI" id="CHEBI:16044"/>
        <dbReference type="ChEBI" id="CHEBI:29950"/>
        <dbReference type="ChEBI" id="CHEBI:44120"/>
        <dbReference type="ChEBI" id="CHEBI:50058"/>
        <dbReference type="EC" id="1.8.4.11"/>
    </reaction>
</comment>
<comment type="catalytic activity">
    <reaction evidence="1">
        <text>[thioredoxin]-disulfide + L-methionine + H2O = L-methionine (S)-S-oxide + [thioredoxin]-dithiol</text>
        <dbReference type="Rhea" id="RHEA:19993"/>
        <dbReference type="Rhea" id="RHEA-COMP:10698"/>
        <dbReference type="Rhea" id="RHEA-COMP:10700"/>
        <dbReference type="ChEBI" id="CHEBI:15377"/>
        <dbReference type="ChEBI" id="CHEBI:29950"/>
        <dbReference type="ChEBI" id="CHEBI:50058"/>
        <dbReference type="ChEBI" id="CHEBI:57844"/>
        <dbReference type="ChEBI" id="CHEBI:58772"/>
        <dbReference type="EC" id="1.8.4.11"/>
    </reaction>
</comment>
<comment type="similarity">
    <text evidence="1">Belongs to the MsrA Met sulfoxide reductase family.</text>
</comment>
<organism>
    <name type="scientific">Saccharophagus degradans (strain 2-40 / ATCC 43961 / DSM 17024)</name>
    <dbReference type="NCBI Taxonomy" id="203122"/>
    <lineage>
        <taxon>Bacteria</taxon>
        <taxon>Pseudomonadati</taxon>
        <taxon>Pseudomonadota</taxon>
        <taxon>Gammaproteobacteria</taxon>
        <taxon>Cellvibrionales</taxon>
        <taxon>Cellvibrionaceae</taxon>
        <taxon>Saccharophagus</taxon>
    </lineage>
</organism>
<name>MSRA_SACD2</name>
<gene>
    <name evidence="1" type="primary">msrA</name>
    <name type="ordered locus">Sde_1862</name>
</gene>
<reference key="1">
    <citation type="journal article" date="2008" name="PLoS Genet.">
        <title>Complete genome sequence of the complex carbohydrate-degrading marine bacterium, Saccharophagus degradans strain 2-40 T.</title>
        <authorList>
            <person name="Weiner R.M."/>
            <person name="Taylor L.E. II"/>
            <person name="Henrissat B."/>
            <person name="Hauser L."/>
            <person name="Land M."/>
            <person name="Coutinho P.M."/>
            <person name="Rancurel C."/>
            <person name="Saunders E.H."/>
            <person name="Longmire A.G."/>
            <person name="Zhang H."/>
            <person name="Bayer E.A."/>
            <person name="Gilbert H.J."/>
            <person name="Larimer F."/>
            <person name="Zhulin I.B."/>
            <person name="Ekborg N.A."/>
            <person name="Lamed R."/>
            <person name="Richardson P.M."/>
            <person name="Borovok I."/>
            <person name="Hutcheson S."/>
        </authorList>
    </citation>
    <scope>NUCLEOTIDE SEQUENCE [LARGE SCALE GENOMIC DNA]</scope>
    <source>
        <strain>2-40 / ATCC 43961 / DSM 17024</strain>
    </source>
</reference>
<feature type="chain" id="PRO_1000068356" description="Peptide methionine sulfoxide reductase MsrA">
    <location>
        <begin position="1"/>
        <end position="215"/>
    </location>
</feature>
<feature type="active site" evidence="1">
    <location>
        <position position="57"/>
    </location>
</feature>